<keyword id="KW-0963">Cytoplasm</keyword>
<keyword id="KW-0238">DNA-binding</keyword>
<keyword id="KW-1185">Reference proteome</keyword>
<keyword id="KW-0804">Transcription</keyword>
<keyword id="KW-0805">Transcription regulation</keyword>
<comment type="subcellular location">
    <subcellularLocation>
        <location evidence="1">Cytoplasm</location>
    </subcellularLocation>
</comment>
<comment type="similarity">
    <text evidence="1">Belongs to the TACO1 family.</text>
</comment>
<proteinExistence type="inferred from homology"/>
<dbReference type="EMBL" id="BX842651">
    <property type="protein sequence ID" value="CAE79814.1"/>
    <property type="molecule type" value="Genomic_DNA"/>
</dbReference>
<dbReference type="RefSeq" id="WP_011164416.1">
    <property type="nucleotide sequence ID" value="NC_005363.1"/>
</dbReference>
<dbReference type="SMR" id="P62033"/>
<dbReference type="STRING" id="264462.Bd1964"/>
<dbReference type="GeneID" id="93012917"/>
<dbReference type="KEGG" id="bba:Bd1964"/>
<dbReference type="eggNOG" id="COG0217">
    <property type="taxonomic scope" value="Bacteria"/>
</dbReference>
<dbReference type="HOGENOM" id="CLU_062974_2_2_7"/>
<dbReference type="Proteomes" id="UP000008080">
    <property type="component" value="Chromosome"/>
</dbReference>
<dbReference type="GO" id="GO:0005737">
    <property type="term" value="C:cytoplasm"/>
    <property type="evidence" value="ECO:0007669"/>
    <property type="project" value="UniProtKB-SubCell"/>
</dbReference>
<dbReference type="GO" id="GO:0003677">
    <property type="term" value="F:DNA binding"/>
    <property type="evidence" value="ECO:0007669"/>
    <property type="project" value="UniProtKB-UniRule"/>
</dbReference>
<dbReference type="GO" id="GO:0006355">
    <property type="term" value="P:regulation of DNA-templated transcription"/>
    <property type="evidence" value="ECO:0007669"/>
    <property type="project" value="UniProtKB-UniRule"/>
</dbReference>
<dbReference type="FunFam" id="1.10.10.200:FF:000004">
    <property type="entry name" value="Probable transcriptional regulatory protein BSBG_02618"/>
    <property type="match status" value="1"/>
</dbReference>
<dbReference type="Gene3D" id="1.10.10.200">
    <property type="match status" value="1"/>
</dbReference>
<dbReference type="Gene3D" id="3.30.70.980">
    <property type="match status" value="2"/>
</dbReference>
<dbReference type="HAMAP" id="MF_00693">
    <property type="entry name" value="Transcrip_reg_TACO1"/>
    <property type="match status" value="1"/>
</dbReference>
<dbReference type="InterPro" id="IPR017856">
    <property type="entry name" value="Integrase-like_N"/>
</dbReference>
<dbReference type="InterPro" id="IPR048300">
    <property type="entry name" value="TACO1_YebC-like_2nd/3rd_dom"/>
</dbReference>
<dbReference type="InterPro" id="IPR049083">
    <property type="entry name" value="TACO1_YebC_N"/>
</dbReference>
<dbReference type="InterPro" id="IPR002876">
    <property type="entry name" value="Transcrip_reg_TACO1-like"/>
</dbReference>
<dbReference type="InterPro" id="IPR026564">
    <property type="entry name" value="Transcrip_reg_TACO1-like_dom3"/>
</dbReference>
<dbReference type="InterPro" id="IPR029072">
    <property type="entry name" value="YebC-like"/>
</dbReference>
<dbReference type="NCBIfam" id="NF001030">
    <property type="entry name" value="PRK00110.1"/>
    <property type="match status" value="1"/>
</dbReference>
<dbReference type="NCBIfam" id="NF009044">
    <property type="entry name" value="PRK12378.1"/>
    <property type="match status" value="1"/>
</dbReference>
<dbReference type="NCBIfam" id="TIGR01033">
    <property type="entry name" value="YebC/PmpR family DNA-binding transcriptional regulator"/>
    <property type="match status" value="1"/>
</dbReference>
<dbReference type="PANTHER" id="PTHR12532">
    <property type="entry name" value="TRANSLATIONAL ACTIVATOR OF CYTOCHROME C OXIDASE 1"/>
    <property type="match status" value="1"/>
</dbReference>
<dbReference type="PANTHER" id="PTHR12532:SF0">
    <property type="entry name" value="TRANSLATIONAL ACTIVATOR OF CYTOCHROME C OXIDASE 1"/>
    <property type="match status" value="1"/>
</dbReference>
<dbReference type="Pfam" id="PF20772">
    <property type="entry name" value="TACO1_YebC_N"/>
    <property type="match status" value="1"/>
</dbReference>
<dbReference type="Pfam" id="PF01709">
    <property type="entry name" value="Transcrip_reg"/>
    <property type="match status" value="1"/>
</dbReference>
<dbReference type="SUPFAM" id="SSF75625">
    <property type="entry name" value="YebC-like"/>
    <property type="match status" value="1"/>
</dbReference>
<gene>
    <name type="ordered locus">Bd1964</name>
</gene>
<protein>
    <recommendedName>
        <fullName evidence="1">Probable transcriptional regulatory protein Bd1964</fullName>
    </recommendedName>
</protein>
<reference key="1">
    <citation type="journal article" date="2004" name="Science">
        <title>A predator unmasked: life cycle of Bdellovibrio bacteriovorus from a genomic perspective.</title>
        <authorList>
            <person name="Rendulic S."/>
            <person name="Jagtap P."/>
            <person name="Rosinus A."/>
            <person name="Eppinger M."/>
            <person name="Baar C."/>
            <person name="Lanz C."/>
            <person name="Keller H."/>
            <person name="Lambert C."/>
            <person name="Evans K.J."/>
            <person name="Goesmann A."/>
            <person name="Meyer F."/>
            <person name="Sockett R.E."/>
            <person name="Schuster S.C."/>
        </authorList>
    </citation>
    <scope>NUCLEOTIDE SEQUENCE [LARGE SCALE GENOMIC DNA]</scope>
    <source>
        <strain>ATCC 15356 / DSM 50701 / NCIMB 9529 / HD100</strain>
    </source>
</reference>
<sequence length="232" mass="25439">MGKSWKTAGKVEKAQQKGQIFTKLAREIAVAAKAGGPDPNANARLRMAIDAAKKVSCPNDTIERAIKKGAGLLDDGKVIEELTYEGYGPHGVGVIVECQTDNKHRTAPDMRHAFKSHDGNMGESGSVAWMFERVGLIEGTKEGSFDPDEEAIEAGANEVFADEGTYEFFTAADDLDAVREALTSRGWKVTKGELSYKAKNITELSDEQRKDVEEFLNYLDDMDDTHRVHATI</sequence>
<name>Y1964_BDEBA</name>
<feature type="chain" id="PRO_0000175767" description="Probable transcriptional regulatory protein Bd1964">
    <location>
        <begin position="1"/>
        <end position="232"/>
    </location>
</feature>
<accession>P62033</accession>
<evidence type="ECO:0000255" key="1">
    <source>
        <dbReference type="HAMAP-Rule" id="MF_00693"/>
    </source>
</evidence>
<organism>
    <name type="scientific">Bdellovibrio bacteriovorus (strain ATCC 15356 / DSM 50701 / NCIMB 9529 / HD100)</name>
    <dbReference type="NCBI Taxonomy" id="264462"/>
    <lineage>
        <taxon>Bacteria</taxon>
        <taxon>Pseudomonadati</taxon>
        <taxon>Bdellovibrionota</taxon>
        <taxon>Bdellovibrionia</taxon>
        <taxon>Bdellovibrionales</taxon>
        <taxon>Pseudobdellovibrionaceae</taxon>
        <taxon>Bdellovibrio</taxon>
    </lineage>
</organism>